<dbReference type="EC" id="4.3.2.3" evidence="1"/>
<dbReference type="EMBL" id="AL591985">
    <property type="protein sequence ID" value="CAC49567.1"/>
    <property type="molecule type" value="Genomic_DNA"/>
</dbReference>
<dbReference type="PIR" id="G95987">
    <property type="entry name" value="G95987"/>
</dbReference>
<dbReference type="RefSeq" id="NP_437707.1">
    <property type="nucleotide sequence ID" value="NC_003078.1"/>
</dbReference>
<dbReference type="RefSeq" id="WP_010975999.1">
    <property type="nucleotide sequence ID" value="NC_003078.1"/>
</dbReference>
<dbReference type="SMR" id="Q92UG4"/>
<dbReference type="EnsemblBacteria" id="CAC49567">
    <property type="protein sequence ID" value="CAC49567"/>
    <property type="gene ID" value="SM_b20873"/>
</dbReference>
<dbReference type="KEGG" id="sme:SM_b20873"/>
<dbReference type="PATRIC" id="fig|266834.11.peg.6093"/>
<dbReference type="eggNOG" id="COG3194">
    <property type="taxonomic scope" value="Bacteria"/>
</dbReference>
<dbReference type="HOGENOM" id="CLU_070848_1_0_5"/>
<dbReference type="OrthoDB" id="9804602at2"/>
<dbReference type="UniPathway" id="UPA00395"/>
<dbReference type="Proteomes" id="UP000001976">
    <property type="component" value="Plasmid pSymB"/>
</dbReference>
<dbReference type="GO" id="GO:0004848">
    <property type="term" value="F:ureidoglycolate hydrolase activity"/>
    <property type="evidence" value="ECO:0007669"/>
    <property type="project" value="InterPro"/>
</dbReference>
<dbReference type="GO" id="GO:0050385">
    <property type="term" value="F:ureidoglycolate lyase activity"/>
    <property type="evidence" value="ECO:0007669"/>
    <property type="project" value="UniProtKB-UniRule"/>
</dbReference>
<dbReference type="GO" id="GO:0000256">
    <property type="term" value="P:allantoin catabolic process"/>
    <property type="evidence" value="ECO:0007669"/>
    <property type="project" value="UniProtKB-UniRule"/>
</dbReference>
<dbReference type="GO" id="GO:0006145">
    <property type="term" value="P:purine nucleobase catabolic process"/>
    <property type="evidence" value="ECO:0007669"/>
    <property type="project" value="UniProtKB-UniRule"/>
</dbReference>
<dbReference type="CDD" id="cd20298">
    <property type="entry name" value="cupin_UAH"/>
    <property type="match status" value="1"/>
</dbReference>
<dbReference type="Gene3D" id="2.60.120.480">
    <property type="entry name" value="Ureidoglycolate hydrolase"/>
    <property type="match status" value="1"/>
</dbReference>
<dbReference type="HAMAP" id="MF_00616">
    <property type="entry name" value="Ureidogly_lyase"/>
    <property type="match status" value="1"/>
</dbReference>
<dbReference type="InterPro" id="IPR011051">
    <property type="entry name" value="RmlC_Cupin_sf"/>
</dbReference>
<dbReference type="InterPro" id="IPR047233">
    <property type="entry name" value="UAH_cupin"/>
</dbReference>
<dbReference type="InterPro" id="IPR007247">
    <property type="entry name" value="Ureidogly_lyase"/>
</dbReference>
<dbReference type="InterPro" id="IPR023525">
    <property type="entry name" value="Ureidogly_lyase_bac"/>
</dbReference>
<dbReference type="InterPro" id="IPR024060">
    <property type="entry name" value="Ureidoglycolate_lyase_dom_sf"/>
</dbReference>
<dbReference type="NCBIfam" id="NF002951">
    <property type="entry name" value="PRK03606.2-2"/>
    <property type="match status" value="1"/>
</dbReference>
<dbReference type="NCBIfam" id="NF009932">
    <property type="entry name" value="PRK13395.1"/>
    <property type="match status" value="1"/>
</dbReference>
<dbReference type="PANTHER" id="PTHR21221">
    <property type="entry name" value="UREIDOGLYCOLATE HYDROLASE"/>
    <property type="match status" value="1"/>
</dbReference>
<dbReference type="PANTHER" id="PTHR21221:SF1">
    <property type="entry name" value="UREIDOGLYCOLATE LYASE"/>
    <property type="match status" value="1"/>
</dbReference>
<dbReference type="Pfam" id="PF04115">
    <property type="entry name" value="Ureidogly_lyase"/>
    <property type="match status" value="1"/>
</dbReference>
<dbReference type="PIRSF" id="PIRSF017306">
    <property type="entry name" value="Ureidogly_hydro"/>
    <property type="match status" value="1"/>
</dbReference>
<dbReference type="SUPFAM" id="SSF51182">
    <property type="entry name" value="RmlC-like cupins"/>
    <property type="match status" value="1"/>
</dbReference>
<geneLocation type="plasmid">
    <name>pSymB</name>
    <name>megaplasmid 2</name>
</geneLocation>
<comment type="function">
    <text evidence="1">Catalyzes the catabolism of the allantoin degradation intermediate (S)-ureidoglycolate, generating urea and glyoxylate. Involved in the utilization of allantoin as nitrogen source.</text>
</comment>
<comment type="catalytic activity">
    <reaction evidence="1">
        <text>(S)-ureidoglycolate = urea + glyoxylate</text>
        <dbReference type="Rhea" id="RHEA:11304"/>
        <dbReference type="ChEBI" id="CHEBI:16199"/>
        <dbReference type="ChEBI" id="CHEBI:36655"/>
        <dbReference type="ChEBI" id="CHEBI:57296"/>
        <dbReference type="EC" id="4.3.2.3"/>
    </reaction>
</comment>
<comment type="cofactor">
    <cofactor evidence="1">
        <name>Ni(2+)</name>
        <dbReference type="ChEBI" id="CHEBI:49786"/>
    </cofactor>
</comment>
<comment type="pathway">
    <text evidence="1">Nitrogen metabolism; (S)-allantoin degradation.</text>
</comment>
<comment type="subunit">
    <text evidence="1">Homodimer.</text>
</comment>
<comment type="similarity">
    <text evidence="1">Belongs to the ureidoglycolate lyase family.</text>
</comment>
<sequence length="170" mass="18930">MSHMLSIEPLTREAFAPFGSVIEADPASMRFINGGNTERFHALARVDAAGEGAGVIINIFRGQPRVFPYSVTMMERHPLGSQSFSPLRDRPWLVVVAEDQGDRPGRPRVFIADGRQGVNYGRNVWHHPLMSVGAVSEFIVVDREGPGNNLEEFHYDEAFVIPDPSSEELR</sequence>
<gene>
    <name evidence="1" type="primary">allA1</name>
    <name type="ordered locus">RB1167</name>
    <name type="ORF">SMb20873</name>
</gene>
<feature type="chain" id="PRO_0000120554" description="Ureidoglycolate lyase 1">
    <location>
        <begin position="1"/>
        <end position="170"/>
    </location>
</feature>
<keyword id="KW-0456">Lyase</keyword>
<keyword id="KW-0614">Plasmid</keyword>
<keyword id="KW-0659">Purine metabolism</keyword>
<keyword id="KW-1185">Reference proteome</keyword>
<evidence type="ECO:0000255" key="1">
    <source>
        <dbReference type="HAMAP-Rule" id="MF_00616"/>
    </source>
</evidence>
<reference key="1">
    <citation type="journal article" date="2001" name="Proc. Natl. Acad. Sci. U.S.A.">
        <title>The complete sequence of the 1,683-kb pSymB megaplasmid from the N2-fixing endosymbiont Sinorhizobium meliloti.</title>
        <authorList>
            <person name="Finan T.M."/>
            <person name="Weidner S."/>
            <person name="Wong K."/>
            <person name="Buhrmester J."/>
            <person name="Chain P."/>
            <person name="Vorhoelter F.J."/>
            <person name="Hernandez-Lucas I."/>
            <person name="Becker A."/>
            <person name="Cowie A."/>
            <person name="Gouzy J."/>
            <person name="Golding B."/>
            <person name="Puehler A."/>
        </authorList>
    </citation>
    <scope>NUCLEOTIDE SEQUENCE [LARGE SCALE GENOMIC DNA]</scope>
    <source>
        <strain>1021</strain>
    </source>
</reference>
<reference key="2">
    <citation type="journal article" date="2001" name="Science">
        <title>The composite genome of the legume symbiont Sinorhizobium meliloti.</title>
        <authorList>
            <person name="Galibert F."/>
            <person name="Finan T.M."/>
            <person name="Long S.R."/>
            <person name="Puehler A."/>
            <person name="Abola P."/>
            <person name="Ampe F."/>
            <person name="Barloy-Hubler F."/>
            <person name="Barnett M.J."/>
            <person name="Becker A."/>
            <person name="Boistard P."/>
            <person name="Bothe G."/>
            <person name="Boutry M."/>
            <person name="Bowser L."/>
            <person name="Buhrmester J."/>
            <person name="Cadieu E."/>
            <person name="Capela D."/>
            <person name="Chain P."/>
            <person name="Cowie A."/>
            <person name="Davis R.W."/>
            <person name="Dreano S."/>
            <person name="Federspiel N.A."/>
            <person name="Fisher R.F."/>
            <person name="Gloux S."/>
            <person name="Godrie T."/>
            <person name="Goffeau A."/>
            <person name="Golding B."/>
            <person name="Gouzy J."/>
            <person name="Gurjal M."/>
            <person name="Hernandez-Lucas I."/>
            <person name="Hong A."/>
            <person name="Huizar L."/>
            <person name="Hyman R.W."/>
            <person name="Jones T."/>
            <person name="Kahn D."/>
            <person name="Kahn M.L."/>
            <person name="Kalman S."/>
            <person name="Keating D.H."/>
            <person name="Kiss E."/>
            <person name="Komp C."/>
            <person name="Lelaure V."/>
            <person name="Masuy D."/>
            <person name="Palm C."/>
            <person name="Peck M.C."/>
            <person name="Pohl T.M."/>
            <person name="Portetelle D."/>
            <person name="Purnelle B."/>
            <person name="Ramsperger U."/>
            <person name="Surzycki R."/>
            <person name="Thebault P."/>
            <person name="Vandenbol M."/>
            <person name="Vorhoelter F.J."/>
            <person name="Weidner S."/>
            <person name="Wells D.H."/>
            <person name="Wong K."/>
            <person name="Yeh K.-C."/>
            <person name="Batut J."/>
        </authorList>
    </citation>
    <scope>NUCLEOTIDE SEQUENCE [LARGE SCALE GENOMIC DNA]</scope>
    <source>
        <strain>1021</strain>
    </source>
</reference>
<proteinExistence type="inferred from homology"/>
<accession>Q92UG4</accession>
<protein>
    <recommendedName>
        <fullName evidence="1">Ureidoglycolate lyase 1</fullName>
        <ecNumber evidence="1">4.3.2.3</ecNumber>
    </recommendedName>
    <alternativeName>
        <fullName evidence="1">Ureidoglycolatase 1</fullName>
    </alternativeName>
</protein>
<name>ALLA1_RHIME</name>
<organism>
    <name type="scientific">Rhizobium meliloti (strain 1021)</name>
    <name type="common">Ensifer meliloti</name>
    <name type="synonym">Sinorhizobium meliloti</name>
    <dbReference type="NCBI Taxonomy" id="266834"/>
    <lineage>
        <taxon>Bacteria</taxon>
        <taxon>Pseudomonadati</taxon>
        <taxon>Pseudomonadota</taxon>
        <taxon>Alphaproteobacteria</taxon>
        <taxon>Hyphomicrobiales</taxon>
        <taxon>Rhizobiaceae</taxon>
        <taxon>Sinorhizobium/Ensifer group</taxon>
        <taxon>Sinorhizobium</taxon>
    </lineage>
</organism>